<comment type="function">
    <text>Guanine nucleotide-binding proteins (G proteins) are involved as modulators or transducers in various transmembrane signaling systems.</text>
</comment>
<comment type="cofactor">
    <cofactor evidence="3">
        <name>Mg(2+)</name>
        <dbReference type="ChEBI" id="CHEBI:18420"/>
    </cofactor>
</comment>
<comment type="subunit">
    <text>G proteins are composed of 3 units; alpha, beta and gamma. The alpha chain contains the guanine nucleotide binding site.</text>
</comment>
<comment type="similarity">
    <text evidence="6">Belongs to the G-alpha family. G(q) subfamily.</text>
</comment>
<keyword id="KW-0342">GTP-binding</keyword>
<keyword id="KW-0378">Hydrolase</keyword>
<keyword id="KW-0449">Lipoprotein</keyword>
<keyword id="KW-0460">Magnesium</keyword>
<keyword id="KW-0479">Metal-binding</keyword>
<keyword id="KW-0519">Myristate</keyword>
<keyword id="KW-0547">Nucleotide-binding</keyword>
<keyword id="KW-0564">Palmitate</keyword>
<keyword id="KW-0807">Transducer</keyword>
<organism>
    <name type="scientific">Colletotrichum trifolii</name>
    <dbReference type="NCBI Taxonomy" id="5466"/>
    <lineage>
        <taxon>Eukaryota</taxon>
        <taxon>Fungi</taxon>
        <taxon>Dikarya</taxon>
        <taxon>Ascomycota</taxon>
        <taxon>Pezizomycotina</taxon>
        <taxon>Sordariomycetes</taxon>
        <taxon>Hypocreomycetidae</taxon>
        <taxon>Glomerellales</taxon>
        <taxon>Glomerellaceae</taxon>
        <taxon>Colletotrichum</taxon>
        <taxon>Colletotrichum orbiculare species complex</taxon>
    </lineage>
</organism>
<evidence type="ECO:0000250" key="1"/>
<evidence type="ECO:0000250" key="2">
    <source>
        <dbReference type="UniProtKB" id="P08539"/>
    </source>
</evidence>
<evidence type="ECO:0000250" key="3">
    <source>
        <dbReference type="UniProtKB" id="P18064"/>
    </source>
</evidence>
<evidence type="ECO:0000255" key="4">
    <source>
        <dbReference type="PROSITE-ProRule" id="PRU01230"/>
    </source>
</evidence>
<evidence type="ECO:0000256" key="5">
    <source>
        <dbReference type="SAM" id="MobiDB-lite"/>
    </source>
</evidence>
<evidence type="ECO:0000305" key="6"/>
<reference key="1">
    <citation type="submission" date="1998-01" db="EMBL/GenBank/DDBJ databases">
        <authorList>
            <person name="Truesdell G.M."/>
            <person name="Dickman M.B."/>
        </authorList>
    </citation>
    <scope>NUCLEOTIDE SEQUENCE [MRNA]</scope>
    <source>
        <strain>Race 1</strain>
    </source>
</reference>
<accession>O42784</accession>
<gene>
    <name type="primary">CTG1</name>
</gene>
<sequence length="353" mass="40982">MGCGMSTEDKEGKARNEEIENQLKRDKMMQRNEIKMLLLGAGESGKSTILKQMKLIHEGGYSRDERESFKEIIFSNTVQSMRVILEAMESLELPLEDQRMEYHVQTIFMQPAQIEGDVLPPEVGSAIEAVWKDRGVQDCFKRSREYQLNDSARYYFDNIARIAAPDYMPNDQDVLRSRVKTTGITETTFIIGDLTYRMFDVGGQRSERKKWIHCFENVTTILFLVAISEYDQLLFEDETVNRMQEALTLFDSICNSRWFIKTSIILFLNKIDRFKEKLPVSPMKNYFPDYEGGDDYAAACDYILNRFVSLNQHETKQIYTHFTCATDTTQIRFVMAAVNDIIIQENLRLCGLI</sequence>
<proteinExistence type="evidence at transcript level"/>
<dbReference type="EMBL" id="AF044894">
    <property type="protein sequence ID" value="AAC03782.1"/>
    <property type="molecule type" value="mRNA"/>
</dbReference>
<dbReference type="SMR" id="O42784"/>
<dbReference type="PHI-base" id="PHI:173"/>
<dbReference type="GO" id="GO:0005737">
    <property type="term" value="C:cytoplasm"/>
    <property type="evidence" value="ECO:0007669"/>
    <property type="project" value="TreeGrafter"/>
</dbReference>
<dbReference type="GO" id="GO:0005834">
    <property type="term" value="C:heterotrimeric G-protein complex"/>
    <property type="evidence" value="ECO:0007669"/>
    <property type="project" value="InterPro"/>
</dbReference>
<dbReference type="GO" id="GO:0001664">
    <property type="term" value="F:G protein-coupled receptor binding"/>
    <property type="evidence" value="ECO:0007669"/>
    <property type="project" value="InterPro"/>
</dbReference>
<dbReference type="GO" id="GO:0031683">
    <property type="term" value="F:G-protein beta/gamma-subunit complex binding"/>
    <property type="evidence" value="ECO:0007669"/>
    <property type="project" value="InterPro"/>
</dbReference>
<dbReference type="GO" id="GO:0005525">
    <property type="term" value="F:GTP binding"/>
    <property type="evidence" value="ECO:0007669"/>
    <property type="project" value="UniProtKB-KW"/>
</dbReference>
<dbReference type="GO" id="GO:0003924">
    <property type="term" value="F:GTPase activity"/>
    <property type="evidence" value="ECO:0007669"/>
    <property type="project" value="InterPro"/>
</dbReference>
<dbReference type="GO" id="GO:0046872">
    <property type="term" value="F:metal ion binding"/>
    <property type="evidence" value="ECO:0007669"/>
    <property type="project" value="UniProtKB-KW"/>
</dbReference>
<dbReference type="GO" id="GO:0007186">
    <property type="term" value="P:G protein-coupled receptor signaling pathway"/>
    <property type="evidence" value="ECO:0007669"/>
    <property type="project" value="InterPro"/>
</dbReference>
<dbReference type="GO" id="GO:0000750">
    <property type="term" value="P:pheromone-dependent signal transduction involved in conjugation with cellular fusion"/>
    <property type="evidence" value="ECO:0007669"/>
    <property type="project" value="TreeGrafter"/>
</dbReference>
<dbReference type="CDD" id="cd00066">
    <property type="entry name" value="G-alpha"/>
    <property type="match status" value="1"/>
</dbReference>
<dbReference type="FunFam" id="1.10.400.10:FF:000001">
    <property type="entry name" value="Guanine nucleotide-binding protein G(I) subunit alpha"/>
    <property type="match status" value="1"/>
</dbReference>
<dbReference type="FunFam" id="3.40.50.300:FF:000051">
    <property type="entry name" value="Guanine nucleotide-binding protein subunit alpha"/>
    <property type="match status" value="1"/>
</dbReference>
<dbReference type="FunFam" id="3.40.50.300:FF:000692">
    <property type="entry name" value="Guanine nucleotide-binding protein subunit alpha"/>
    <property type="match status" value="1"/>
</dbReference>
<dbReference type="Gene3D" id="1.10.400.10">
    <property type="entry name" value="GI Alpha 1, domain 2-like"/>
    <property type="match status" value="1"/>
</dbReference>
<dbReference type="Gene3D" id="3.40.50.300">
    <property type="entry name" value="P-loop containing nucleotide triphosphate hydrolases"/>
    <property type="match status" value="1"/>
</dbReference>
<dbReference type="InterPro" id="IPR002975">
    <property type="entry name" value="Fungi_Gprotein_alpha"/>
</dbReference>
<dbReference type="InterPro" id="IPR001019">
    <property type="entry name" value="Gprotein_alpha_su"/>
</dbReference>
<dbReference type="InterPro" id="IPR011025">
    <property type="entry name" value="GproteinA_insert"/>
</dbReference>
<dbReference type="InterPro" id="IPR027417">
    <property type="entry name" value="P-loop_NTPase"/>
</dbReference>
<dbReference type="PANTHER" id="PTHR10218">
    <property type="entry name" value="GTP-BINDING PROTEIN ALPHA SUBUNIT"/>
    <property type="match status" value="1"/>
</dbReference>
<dbReference type="PANTHER" id="PTHR10218:SF302">
    <property type="entry name" value="GUANINE NUCLEOTIDE-BINDING PROTEIN ALPHA-5 SUBUNIT"/>
    <property type="match status" value="1"/>
</dbReference>
<dbReference type="Pfam" id="PF00503">
    <property type="entry name" value="G-alpha"/>
    <property type="match status" value="1"/>
</dbReference>
<dbReference type="PRINTS" id="PR00318">
    <property type="entry name" value="GPROTEINA"/>
</dbReference>
<dbReference type="PRINTS" id="PR01241">
    <property type="entry name" value="GPROTEINAFNG"/>
</dbReference>
<dbReference type="SMART" id="SM00275">
    <property type="entry name" value="G_alpha"/>
    <property type="match status" value="1"/>
</dbReference>
<dbReference type="SUPFAM" id="SSF52540">
    <property type="entry name" value="P-loop containing nucleoside triphosphate hydrolases"/>
    <property type="match status" value="1"/>
</dbReference>
<dbReference type="SUPFAM" id="SSF47895">
    <property type="entry name" value="Transducin (alpha subunit), insertion domain"/>
    <property type="match status" value="1"/>
</dbReference>
<dbReference type="PROSITE" id="PS51882">
    <property type="entry name" value="G_ALPHA"/>
    <property type="match status" value="1"/>
</dbReference>
<name>GPA1_COLTR</name>
<protein>
    <recommendedName>
        <fullName>Guanine nucleotide-binding protein subunit alpha</fullName>
    </recommendedName>
</protein>
<feature type="initiator methionine" description="Removed" evidence="1">
    <location>
        <position position="1"/>
    </location>
</feature>
<feature type="chain" id="PRO_0000203597" description="Guanine nucleotide-binding protein subunit alpha">
    <location>
        <begin position="2"/>
        <end position="353"/>
    </location>
</feature>
<feature type="domain" description="G-alpha" evidence="4">
    <location>
        <begin position="32"/>
        <end position="353"/>
    </location>
</feature>
<feature type="region of interest" description="Disordered" evidence="5">
    <location>
        <begin position="1"/>
        <end position="25"/>
    </location>
</feature>
<feature type="region of interest" description="G1 motif" evidence="4">
    <location>
        <begin position="35"/>
        <end position="48"/>
    </location>
</feature>
<feature type="region of interest" description="G2 motif" evidence="4">
    <location>
        <begin position="173"/>
        <end position="181"/>
    </location>
</feature>
<feature type="region of interest" description="G3 motif" evidence="4">
    <location>
        <begin position="196"/>
        <end position="205"/>
    </location>
</feature>
<feature type="region of interest" description="G4 motif" evidence="4">
    <location>
        <begin position="265"/>
        <end position="272"/>
    </location>
</feature>
<feature type="region of interest" description="G5 motif" evidence="4">
    <location>
        <begin position="323"/>
        <end position="328"/>
    </location>
</feature>
<feature type="compositionally biased region" description="Basic and acidic residues" evidence="5">
    <location>
        <begin position="7"/>
        <end position="25"/>
    </location>
</feature>
<feature type="binding site" evidence="3">
    <location>
        <position position="43"/>
    </location>
    <ligand>
        <name>GTP</name>
        <dbReference type="ChEBI" id="CHEBI:37565"/>
    </ligand>
</feature>
<feature type="binding site" evidence="3">
    <location>
        <position position="44"/>
    </location>
    <ligand>
        <name>GTP</name>
        <dbReference type="ChEBI" id="CHEBI:37565"/>
    </ligand>
</feature>
<feature type="binding site" evidence="3">
    <location>
        <position position="45"/>
    </location>
    <ligand>
        <name>GTP</name>
        <dbReference type="ChEBI" id="CHEBI:37565"/>
    </ligand>
</feature>
<feature type="binding site" evidence="3">
    <location>
        <position position="46"/>
    </location>
    <ligand>
        <name>GTP</name>
        <dbReference type="ChEBI" id="CHEBI:37565"/>
    </ligand>
</feature>
<feature type="binding site" evidence="3">
    <location>
        <position position="47"/>
    </location>
    <ligand>
        <name>GTP</name>
        <dbReference type="ChEBI" id="CHEBI:37565"/>
    </ligand>
</feature>
<feature type="binding site" evidence="3">
    <location>
        <position position="47"/>
    </location>
    <ligand>
        <name>Mg(2+)</name>
        <dbReference type="ChEBI" id="CHEBI:18420"/>
    </ligand>
</feature>
<feature type="binding site" evidence="3">
    <location>
        <position position="48"/>
    </location>
    <ligand>
        <name>GTP</name>
        <dbReference type="ChEBI" id="CHEBI:37565"/>
    </ligand>
</feature>
<feature type="binding site" evidence="3">
    <location>
        <position position="150"/>
    </location>
    <ligand>
        <name>GTP</name>
        <dbReference type="ChEBI" id="CHEBI:37565"/>
    </ligand>
</feature>
<feature type="binding site" evidence="3">
    <location>
        <position position="175"/>
    </location>
    <ligand>
        <name>GTP</name>
        <dbReference type="ChEBI" id="CHEBI:37565"/>
    </ligand>
</feature>
<feature type="binding site" evidence="3">
    <location>
        <position position="181"/>
    </location>
    <ligand>
        <name>GTP</name>
        <dbReference type="ChEBI" id="CHEBI:37565"/>
    </ligand>
</feature>
<feature type="binding site" evidence="3">
    <location>
        <position position="181"/>
    </location>
    <ligand>
        <name>Mg(2+)</name>
        <dbReference type="ChEBI" id="CHEBI:18420"/>
    </ligand>
</feature>
<feature type="binding site" evidence="3">
    <location>
        <position position="203"/>
    </location>
    <ligand>
        <name>GTP</name>
        <dbReference type="ChEBI" id="CHEBI:37565"/>
    </ligand>
</feature>
<feature type="binding site" evidence="3">
    <location>
        <position position="269"/>
    </location>
    <ligand>
        <name>GTP</name>
        <dbReference type="ChEBI" id="CHEBI:37565"/>
    </ligand>
</feature>
<feature type="binding site" evidence="3">
    <location>
        <position position="270"/>
    </location>
    <ligand>
        <name>GTP</name>
        <dbReference type="ChEBI" id="CHEBI:37565"/>
    </ligand>
</feature>
<feature type="binding site" evidence="3">
    <location>
        <position position="272"/>
    </location>
    <ligand>
        <name>GTP</name>
        <dbReference type="ChEBI" id="CHEBI:37565"/>
    </ligand>
</feature>
<feature type="binding site" evidence="3">
    <location>
        <position position="325"/>
    </location>
    <ligand>
        <name>GTP</name>
        <dbReference type="ChEBI" id="CHEBI:37565"/>
    </ligand>
</feature>
<feature type="lipid moiety-binding region" description="N-myristoyl glycine" evidence="2">
    <location>
        <position position="2"/>
    </location>
</feature>
<feature type="lipid moiety-binding region" description="S-palmitoyl cysteine" evidence="2">
    <location>
        <position position="3"/>
    </location>
</feature>